<sequence length="301" mass="33223">MSGDGEWRQELDEQQLEDVRRLLLAVREADGRPEVEPAGALPGEFDGGEHLVACVEGEVVGYAHLNTTGNSFGHQVAELFVHPAHRNRGYGAKLLQALDERAAVGFRVWAHGDHPAARKLALKTGLERKRELLILHVDVEGADWPEPILRDGVSLRTFVPGQDEDAVVRVNARAFDWHPEQGALTVEDVRADERRAWFDEDGFFLAEERGEVIGFHWTKVHEPTPGRFGGERVGEVYVVGVDPAAQGGGLGRALTLAGLRYLASRGLRQIILYVEGDNAAALAVYTKLGFTRHETDVQYGR</sequence>
<gene>
    <name evidence="1" type="primary">mshD</name>
    <name type="synonym">LH3</name>
    <name evidence="2" type="ordered locus">AMED_9007</name>
</gene>
<reference key="1">
    <citation type="journal article" date="2006" name="Acta Biochim. Biophys. Sin.">
        <title>Identification and characterization of glnA promoter and its corresponding trans-regulatory protein GlnR in the rifamycin SV producing actinomycete, Amycolatopsis mediterranei U32.</title>
        <authorList>
            <person name="Yu H."/>
            <person name="Peng W.T."/>
            <person name="Liu Y."/>
            <person name="Wu T."/>
            <person name="Yao Y.F."/>
            <person name="Cui M.X."/>
            <person name="Jiang W.H."/>
            <person name="Zhao G.P."/>
        </authorList>
    </citation>
    <scope>NUCLEOTIDE SEQUENCE [GENOMIC DNA]</scope>
    <source>
        <strain>U-32</strain>
    </source>
</reference>
<reference key="2">
    <citation type="submission" date="2006-03" db="EMBL/GenBank/DDBJ databases">
        <title>Cloning and preliminary characterization of the glnR operon in Amycolatopsis mediterranei U32.</title>
        <authorList>
            <person name="Yu H."/>
            <person name="Jiang W."/>
            <person name="Zhao G."/>
        </authorList>
    </citation>
    <scope>NUCLEOTIDE SEQUENCE [GENOMIC DNA]</scope>
    <source>
        <strain>U-32</strain>
    </source>
</reference>
<reference key="3">
    <citation type="journal article" date="2010" name="Cell Res.">
        <title>Complete genome sequence of the rifamycin SV-producing Amycolatopsis mediterranei U32 revealed its genetic characteristics in phylogeny and metabolism.</title>
        <authorList>
            <person name="Zhao W."/>
            <person name="Zhong Y."/>
            <person name="Yuan H."/>
            <person name="Wang J."/>
            <person name="Zheng H."/>
            <person name="Wang Y."/>
            <person name="Cen X."/>
            <person name="Xu F."/>
            <person name="Bai J."/>
            <person name="Han X."/>
            <person name="Lu G."/>
            <person name="Zhu Y."/>
            <person name="Shao Z."/>
            <person name="Yan H."/>
            <person name="Li C."/>
            <person name="Peng N."/>
            <person name="Zhang Z."/>
            <person name="Zhang Y."/>
            <person name="Lin W."/>
            <person name="Fan Y."/>
            <person name="Qin Z."/>
            <person name="Hu Y."/>
            <person name="Zhu B."/>
            <person name="Wang S."/>
            <person name="Ding X."/>
            <person name="Zhao G.P."/>
        </authorList>
    </citation>
    <scope>NUCLEOTIDE SEQUENCE [LARGE SCALE GENOMIC DNA]</scope>
    <source>
        <strain>U-32</strain>
    </source>
</reference>
<organism>
    <name type="scientific">Amycolatopsis mediterranei (strain U-32)</name>
    <dbReference type="NCBI Taxonomy" id="749927"/>
    <lineage>
        <taxon>Bacteria</taxon>
        <taxon>Bacillati</taxon>
        <taxon>Actinomycetota</taxon>
        <taxon>Actinomycetes</taxon>
        <taxon>Pseudonocardiales</taxon>
        <taxon>Pseudonocardiaceae</taxon>
        <taxon>Amycolatopsis</taxon>
    </lineage>
</organism>
<comment type="function">
    <text evidence="1">Catalyzes the transfer of acetyl from acetyl-CoA to desacetylmycothiol (Cys-GlcN-Ins) to form mycothiol.</text>
</comment>
<comment type="catalytic activity">
    <reaction evidence="1">
        <text>1D-myo-inositol 2-(L-cysteinylamino)-2-deoxy-alpha-D-glucopyranoside + acetyl-CoA = mycothiol + CoA + H(+)</text>
        <dbReference type="Rhea" id="RHEA:26172"/>
        <dbReference type="ChEBI" id="CHEBI:15378"/>
        <dbReference type="ChEBI" id="CHEBI:16768"/>
        <dbReference type="ChEBI" id="CHEBI:57287"/>
        <dbReference type="ChEBI" id="CHEBI:57288"/>
        <dbReference type="ChEBI" id="CHEBI:58887"/>
        <dbReference type="EC" id="2.3.1.189"/>
    </reaction>
</comment>
<comment type="subunit">
    <text evidence="1">Monomer.</text>
</comment>
<comment type="similarity">
    <text evidence="1">Belongs to the acetyltransferase family. MshD subfamily.</text>
</comment>
<feature type="chain" id="PRO_0000400237" description="Mycothiol acetyltransferase">
    <location>
        <begin position="1"/>
        <end position="301"/>
    </location>
</feature>
<feature type="domain" description="N-acetyltransferase 1" evidence="1">
    <location>
        <begin position="6"/>
        <end position="151"/>
    </location>
</feature>
<feature type="domain" description="N-acetyltransferase 2" evidence="1">
    <location>
        <begin position="153"/>
        <end position="301"/>
    </location>
</feature>
<feature type="binding site" evidence="1">
    <location>
        <begin position="79"/>
        <end position="81"/>
    </location>
    <ligand>
        <name>acetyl-CoA</name>
        <dbReference type="ChEBI" id="CHEBI:57288"/>
        <label>1</label>
    </ligand>
</feature>
<feature type="binding site" evidence="1">
    <location>
        <position position="180"/>
    </location>
    <ligand>
        <name>1D-myo-inositol 2-(L-cysteinylamino)-2-deoxy-alpha-D-glucopyranoside</name>
        <dbReference type="ChEBI" id="CHEBI:58887"/>
    </ligand>
</feature>
<feature type="binding site" evidence="1">
    <location>
        <position position="219"/>
    </location>
    <ligand>
        <name>1D-myo-inositol 2-(L-cysteinylamino)-2-deoxy-alpha-D-glucopyranoside</name>
        <dbReference type="ChEBI" id="CHEBI:58887"/>
    </ligand>
</feature>
<feature type="binding site" evidence="1">
    <location>
        <position position="235"/>
    </location>
    <ligand>
        <name>1D-myo-inositol 2-(L-cysteinylamino)-2-deoxy-alpha-D-glucopyranoside</name>
        <dbReference type="ChEBI" id="CHEBI:58887"/>
    </ligand>
</feature>
<feature type="binding site" evidence="1">
    <location>
        <begin position="239"/>
        <end position="241"/>
    </location>
    <ligand>
        <name>acetyl-CoA</name>
        <dbReference type="ChEBI" id="CHEBI:57288"/>
        <label>2</label>
    </ligand>
</feature>
<feature type="binding site" evidence="1">
    <location>
        <begin position="246"/>
        <end position="252"/>
    </location>
    <ligand>
        <name>acetyl-CoA</name>
        <dbReference type="ChEBI" id="CHEBI:57288"/>
        <label>2</label>
    </ligand>
</feature>
<feature type="binding site" evidence="1">
    <location>
        <position position="273"/>
    </location>
    <ligand>
        <name>1D-myo-inositol 2-(L-cysteinylamino)-2-deoxy-alpha-D-glucopyranoside</name>
        <dbReference type="ChEBI" id="CHEBI:58887"/>
    </ligand>
</feature>
<proteinExistence type="inferred from homology"/>
<evidence type="ECO:0000255" key="1">
    <source>
        <dbReference type="HAMAP-Rule" id="MF_01698"/>
    </source>
</evidence>
<evidence type="ECO:0000312" key="2">
    <source>
        <dbReference type="EMBL" id="ADJ50697.1"/>
    </source>
</evidence>
<keyword id="KW-0012">Acyltransferase</keyword>
<keyword id="KW-1185">Reference proteome</keyword>
<keyword id="KW-0677">Repeat</keyword>
<keyword id="KW-0808">Transferase</keyword>
<accession>Q5EDG0</accession>
<accession>A0A0H3DKE5</accession>
<dbReference type="EC" id="2.3.1.189" evidence="1"/>
<dbReference type="EMBL" id="DQ432066">
    <property type="protein sequence ID" value="AAW82910.1"/>
    <property type="molecule type" value="Genomic_DNA"/>
</dbReference>
<dbReference type="EMBL" id="CP002000">
    <property type="protein sequence ID" value="ADJ50697.1"/>
    <property type="molecule type" value="Genomic_DNA"/>
</dbReference>
<dbReference type="RefSeq" id="WP_013230716.1">
    <property type="nucleotide sequence ID" value="NC_014318.1"/>
</dbReference>
<dbReference type="RefSeq" id="YP_003771099.1">
    <property type="nucleotide sequence ID" value="NC_014318.1"/>
</dbReference>
<dbReference type="SMR" id="Q5EDG0"/>
<dbReference type="GeneID" id="92876606"/>
<dbReference type="KEGG" id="amd:AMED_9007"/>
<dbReference type="PATRIC" id="fig|33910.4.peg.920"/>
<dbReference type="eggNOG" id="COG0456">
    <property type="taxonomic scope" value="Bacteria"/>
</dbReference>
<dbReference type="eggNOG" id="COG3393">
    <property type="taxonomic scope" value="Bacteria"/>
</dbReference>
<dbReference type="HOGENOM" id="CLU_068014_0_0_11"/>
<dbReference type="OrthoDB" id="3208058at2"/>
<dbReference type="Proteomes" id="UP000000328">
    <property type="component" value="Chromosome"/>
</dbReference>
<dbReference type="GO" id="GO:0035447">
    <property type="term" value="F:mycothiol synthase activity"/>
    <property type="evidence" value="ECO:0007669"/>
    <property type="project" value="UniProtKB-UniRule"/>
</dbReference>
<dbReference type="GO" id="GO:0008999">
    <property type="term" value="F:protein-N-terminal-alanine acetyltransferase activity"/>
    <property type="evidence" value="ECO:0007669"/>
    <property type="project" value="TreeGrafter"/>
</dbReference>
<dbReference type="GO" id="GO:0010125">
    <property type="term" value="P:mycothiol biosynthetic process"/>
    <property type="evidence" value="ECO:0007669"/>
    <property type="project" value="UniProtKB-UniRule"/>
</dbReference>
<dbReference type="CDD" id="cd04301">
    <property type="entry name" value="NAT_SF"/>
    <property type="match status" value="2"/>
</dbReference>
<dbReference type="Gene3D" id="3.40.630.30">
    <property type="match status" value="1"/>
</dbReference>
<dbReference type="HAMAP" id="MF_01698">
    <property type="entry name" value="MshD"/>
    <property type="match status" value="1"/>
</dbReference>
<dbReference type="InterPro" id="IPR016181">
    <property type="entry name" value="Acyl_CoA_acyltransferase"/>
</dbReference>
<dbReference type="InterPro" id="IPR000182">
    <property type="entry name" value="GNAT_dom"/>
</dbReference>
<dbReference type="InterPro" id="IPR050276">
    <property type="entry name" value="MshD_Acetyltransferase"/>
</dbReference>
<dbReference type="InterPro" id="IPR017813">
    <property type="entry name" value="Mycothiol_AcTrfase"/>
</dbReference>
<dbReference type="NCBIfam" id="TIGR03448">
    <property type="entry name" value="mycothiol_MshD"/>
    <property type="match status" value="1"/>
</dbReference>
<dbReference type="PANTHER" id="PTHR43617">
    <property type="entry name" value="L-AMINO ACID N-ACETYLTRANSFERASE"/>
    <property type="match status" value="1"/>
</dbReference>
<dbReference type="PANTHER" id="PTHR43617:SF31">
    <property type="entry name" value="MYCOTHIOL ACETYLTRANSFERASE"/>
    <property type="match status" value="1"/>
</dbReference>
<dbReference type="Pfam" id="PF00583">
    <property type="entry name" value="Acetyltransf_1"/>
    <property type="match status" value="1"/>
</dbReference>
<dbReference type="Pfam" id="PF13508">
    <property type="entry name" value="Acetyltransf_7"/>
    <property type="match status" value="1"/>
</dbReference>
<dbReference type="PIRSF" id="PIRSF021524">
    <property type="entry name" value="MSH_acetyltransferase"/>
    <property type="match status" value="1"/>
</dbReference>
<dbReference type="SUPFAM" id="SSF55729">
    <property type="entry name" value="Acyl-CoA N-acyltransferases (Nat)"/>
    <property type="match status" value="1"/>
</dbReference>
<dbReference type="PROSITE" id="PS51186">
    <property type="entry name" value="GNAT"/>
    <property type="match status" value="2"/>
</dbReference>
<protein>
    <recommendedName>
        <fullName evidence="1">Mycothiol acetyltransferase</fullName>
        <shortName evidence="1">MSH acetyltransferase</shortName>
        <ecNumber evidence="1">2.3.1.189</ecNumber>
    </recommendedName>
    <alternativeName>
        <fullName evidence="1">Mycothiol synthase</fullName>
    </alternativeName>
</protein>
<name>MSHD_AMYMU</name>